<protein>
    <recommendedName>
        <fullName>Tyrosine-protein phosphatase non-receptor type 5</fullName>
        <ecNumber>3.1.3.48</ecNumber>
    </recommendedName>
    <alternativeName>
        <fullName>Neural-specific protein-tyrosine phosphatase</fullName>
    </alternativeName>
    <alternativeName>
        <fullName>Striatum-enriched protein-tyrosine phosphatase</fullName>
        <shortName>STEP</shortName>
    </alternativeName>
</protein>
<keyword id="KW-0963">Cytoplasm</keyword>
<keyword id="KW-0378">Hydrolase</keyword>
<keyword id="KW-0597">Phosphoprotein</keyword>
<keyword id="KW-0904">Protein phosphatase</keyword>
<keyword id="KW-1185">Reference proteome</keyword>
<proteinExistence type="evidence at transcript level"/>
<organism>
    <name type="scientific">Rattus norvegicus</name>
    <name type="common">Rat</name>
    <dbReference type="NCBI Taxonomy" id="10116"/>
    <lineage>
        <taxon>Eukaryota</taxon>
        <taxon>Metazoa</taxon>
        <taxon>Chordata</taxon>
        <taxon>Craniata</taxon>
        <taxon>Vertebrata</taxon>
        <taxon>Euteleostomi</taxon>
        <taxon>Mammalia</taxon>
        <taxon>Eutheria</taxon>
        <taxon>Euarchontoglires</taxon>
        <taxon>Glires</taxon>
        <taxon>Rodentia</taxon>
        <taxon>Myomorpha</taxon>
        <taxon>Muroidea</taxon>
        <taxon>Muridae</taxon>
        <taxon>Murinae</taxon>
        <taxon>Rattus</taxon>
    </lineage>
</organism>
<sequence length="369" mass="42366">MEEKVEDDFLDLDAVPETPVFDCVMDIKPEADPTSLTVKSMGLQERRGSNVSLTLDMCTPGCNEEGFGYLVSPREESAHEYLLSASRVLRAEELHEKALDPFLLQAEFFEIPMNFVDPKEYDIPGLVRKNRYKTILPNPHSRVRLTSPDPEDPLSSYINANYIRGYNGEEKVYIATQGPIVSTVVDFWRMVWQERTPIIVMITNIEEMNEKCTEYWPEEQVVHDGVEITVQKVIHTEDYRLRLISLRRGTEERGLKHYWFTSWPDQKTPDRAPPLLHLVREVEEAAQQEGPHCSPIIVHCSAGIGRTGCFIATSICCQQLRREGVVDILKTTCQLRQDRGGMIQTCEQYQFVHHAMSLYEKQLSLQSSE</sequence>
<evidence type="ECO:0000250" key="1"/>
<evidence type="ECO:0000250" key="2">
    <source>
        <dbReference type="UniProtKB" id="P54829"/>
    </source>
</evidence>
<evidence type="ECO:0000255" key="3">
    <source>
        <dbReference type="PROSITE-ProRule" id="PRU00160"/>
    </source>
</evidence>
<evidence type="ECO:0000255" key="4">
    <source>
        <dbReference type="PROSITE-ProRule" id="PRU10044"/>
    </source>
</evidence>
<evidence type="ECO:0000305" key="5"/>
<gene>
    <name type="primary">Ptpn5</name>
</gene>
<accession>P35234</accession>
<dbReference type="EC" id="3.1.3.48"/>
<dbReference type="EMBL" id="S49400">
    <property type="protein sequence ID" value="AAB19491.1"/>
    <property type="molecule type" value="mRNA"/>
</dbReference>
<dbReference type="PIR" id="A41147">
    <property type="entry name" value="A41147"/>
</dbReference>
<dbReference type="RefSeq" id="NP_062126.3">
    <property type="nucleotide sequence ID" value="NM_019253.3"/>
</dbReference>
<dbReference type="BMRB" id="P35234"/>
<dbReference type="SMR" id="P35234"/>
<dbReference type="BioGRID" id="248266">
    <property type="interactions" value="5"/>
</dbReference>
<dbReference type="FunCoup" id="P35234">
    <property type="interactions" value="1351"/>
</dbReference>
<dbReference type="IntAct" id="P35234">
    <property type="interactions" value="1"/>
</dbReference>
<dbReference type="MINT" id="P35234"/>
<dbReference type="STRING" id="10116.ENSRNOP00000018860"/>
<dbReference type="ChEMBL" id="CHEMBL2429710"/>
<dbReference type="iPTMnet" id="P35234"/>
<dbReference type="PhosphoSitePlus" id="P35234"/>
<dbReference type="PaxDb" id="10116-ENSRNOP00000018860"/>
<dbReference type="DNASU" id="29644"/>
<dbReference type="UCSC" id="RGD:3448">
    <property type="organism name" value="rat"/>
</dbReference>
<dbReference type="AGR" id="RGD:3448"/>
<dbReference type="RGD" id="3448">
    <property type="gene designation" value="Ptpn5"/>
</dbReference>
<dbReference type="eggNOG" id="KOG0789">
    <property type="taxonomic scope" value="Eukaryota"/>
</dbReference>
<dbReference type="InParanoid" id="P35234"/>
<dbReference type="PhylomeDB" id="P35234"/>
<dbReference type="PRO" id="PR:P35234"/>
<dbReference type="Proteomes" id="UP000002494">
    <property type="component" value="Unplaced"/>
</dbReference>
<dbReference type="GO" id="GO:0030424">
    <property type="term" value="C:axon"/>
    <property type="evidence" value="ECO:0000314"/>
    <property type="project" value="RGD"/>
</dbReference>
<dbReference type="GO" id="GO:0030054">
    <property type="term" value="C:cell junction"/>
    <property type="evidence" value="ECO:0000318"/>
    <property type="project" value="GO_Central"/>
</dbReference>
<dbReference type="GO" id="GO:0005829">
    <property type="term" value="C:cytosol"/>
    <property type="evidence" value="ECO:0000318"/>
    <property type="project" value="GO_Central"/>
</dbReference>
<dbReference type="GO" id="GO:0043025">
    <property type="term" value="C:neuronal cell body"/>
    <property type="evidence" value="ECO:0000314"/>
    <property type="project" value="RGD"/>
</dbReference>
<dbReference type="GO" id="GO:0043204">
    <property type="term" value="C:perikaryon"/>
    <property type="evidence" value="ECO:0000314"/>
    <property type="project" value="RGD"/>
</dbReference>
<dbReference type="GO" id="GO:0005886">
    <property type="term" value="C:plasma membrane"/>
    <property type="evidence" value="ECO:0000318"/>
    <property type="project" value="GO_Central"/>
</dbReference>
<dbReference type="GO" id="GO:1990635">
    <property type="term" value="C:proximal dendrite"/>
    <property type="evidence" value="ECO:0000314"/>
    <property type="project" value="RGD"/>
</dbReference>
<dbReference type="GO" id="GO:0097060">
    <property type="term" value="C:synaptic membrane"/>
    <property type="evidence" value="ECO:0000314"/>
    <property type="project" value="RGD"/>
</dbReference>
<dbReference type="GO" id="GO:0008021">
    <property type="term" value="C:synaptic vesicle"/>
    <property type="evidence" value="ECO:0000314"/>
    <property type="project" value="RGD"/>
</dbReference>
<dbReference type="GO" id="GO:0042802">
    <property type="term" value="F:identical protein binding"/>
    <property type="evidence" value="ECO:0000353"/>
    <property type="project" value="RGD"/>
</dbReference>
<dbReference type="GO" id="GO:0001784">
    <property type="term" value="F:phosphotyrosine residue binding"/>
    <property type="evidence" value="ECO:0000266"/>
    <property type="project" value="RGD"/>
</dbReference>
<dbReference type="GO" id="GO:0019901">
    <property type="term" value="F:protein kinase binding"/>
    <property type="evidence" value="ECO:0000318"/>
    <property type="project" value="GO_Central"/>
</dbReference>
<dbReference type="GO" id="GO:0004725">
    <property type="term" value="F:protein tyrosine phosphatase activity"/>
    <property type="evidence" value="ECO:0000314"/>
    <property type="project" value="RGD"/>
</dbReference>
<dbReference type="GO" id="GO:0035640">
    <property type="term" value="P:exploration behavior"/>
    <property type="evidence" value="ECO:0000314"/>
    <property type="project" value="RGD"/>
</dbReference>
<dbReference type="GO" id="GO:1900273">
    <property type="term" value="P:positive regulation of long-term synaptic potentiation"/>
    <property type="evidence" value="ECO:0000315"/>
    <property type="project" value="RGD"/>
</dbReference>
<dbReference type="GO" id="GO:0010976">
    <property type="term" value="P:positive regulation of neuron projection development"/>
    <property type="evidence" value="ECO:0000315"/>
    <property type="project" value="RGD"/>
</dbReference>
<dbReference type="GO" id="GO:0042307">
    <property type="term" value="P:positive regulation of protein import into nucleus"/>
    <property type="evidence" value="ECO:0000315"/>
    <property type="project" value="RGD"/>
</dbReference>
<dbReference type="GO" id="GO:1903955">
    <property type="term" value="P:positive regulation of protein targeting to mitochondrion"/>
    <property type="evidence" value="ECO:0000315"/>
    <property type="project" value="RGD"/>
</dbReference>
<dbReference type="GO" id="GO:0002092">
    <property type="term" value="P:positive regulation of receptor internalization"/>
    <property type="evidence" value="ECO:0000315"/>
    <property type="project" value="RGD"/>
</dbReference>
<dbReference type="GO" id="GO:2001025">
    <property type="term" value="P:positive regulation of response to drug"/>
    <property type="evidence" value="ECO:0000315"/>
    <property type="project" value="RGD"/>
</dbReference>
<dbReference type="GO" id="GO:0043523">
    <property type="term" value="P:regulation of neuron apoptotic process"/>
    <property type="evidence" value="ECO:0000315"/>
    <property type="project" value="RGD"/>
</dbReference>
<dbReference type="GO" id="GO:0001975">
    <property type="term" value="P:response to amphetamine"/>
    <property type="evidence" value="ECO:0000270"/>
    <property type="project" value="RGD"/>
</dbReference>
<dbReference type="GO" id="GO:0035902">
    <property type="term" value="P:response to immobilization stress"/>
    <property type="evidence" value="ECO:0000314"/>
    <property type="project" value="RGD"/>
</dbReference>
<dbReference type="GO" id="GO:0009410">
    <property type="term" value="P:response to xenobiotic stimulus"/>
    <property type="evidence" value="ECO:0000270"/>
    <property type="project" value="RGD"/>
</dbReference>
<dbReference type="GO" id="GO:0007165">
    <property type="term" value="P:signal transduction"/>
    <property type="evidence" value="ECO:0000318"/>
    <property type="project" value="GO_Central"/>
</dbReference>
<dbReference type="CDD" id="cd14613">
    <property type="entry name" value="PTPc-N5"/>
    <property type="match status" value="1"/>
</dbReference>
<dbReference type="FunFam" id="3.90.190.10:FF:000020">
    <property type="entry name" value="Tyrosine-protein phosphatase non-receptor type 5"/>
    <property type="match status" value="1"/>
</dbReference>
<dbReference type="Gene3D" id="3.90.190.10">
    <property type="entry name" value="Protein tyrosine phosphatase superfamily"/>
    <property type="match status" value="1"/>
</dbReference>
<dbReference type="InterPro" id="IPR029021">
    <property type="entry name" value="Prot-tyrosine_phosphatase-like"/>
</dbReference>
<dbReference type="InterPro" id="IPR000242">
    <property type="entry name" value="PTP_cat"/>
</dbReference>
<dbReference type="InterPro" id="IPR016130">
    <property type="entry name" value="Tyr_Pase_AS"/>
</dbReference>
<dbReference type="InterPro" id="IPR003595">
    <property type="entry name" value="Tyr_Pase_cat"/>
</dbReference>
<dbReference type="InterPro" id="IPR000387">
    <property type="entry name" value="Tyr_Pase_dom"/>
</dbReference>
<dbReference type="InterPro" id="IPR008356">
    <property type="entry name" value="Tyr_Pase_KIM-con"/>
</dbReference>
<dbReference type="PANTHER" id="PTHR46198">
    <property type="entry name" value="PROTEIN-TYROSINE-PHOSPHATASE"/>
    <property type="match status" value="1"/>
</dbReference>
<dbReference type="PANTHER" id="PTHR46198:SF1">
    <property type="entry name" value="TYROSINE-PROTEIN PHOSPHATASE NON-RECEPTOR TYPE 5"/>
    <property type="match status" value="1"/>
</dbReference>
<dbReference type="Pfam" id="PF00102">
    <property type="entry name" value="Y_phosphatase"/>
    <property type="match status" value="1"/>
</dbReference>
<dbReference type="PRINTS" id="PR01778">
    <property type="entry name" value="KIMPTPASE"/>
</dbReference>
<dbReference type="PRINTS" id="PR00700">
    <property type="entry name" value="PRTYPHPHTASE"/>
</dbReference>
<dbReference type="SMART" id="SM00194">
    <property type="entry name" value="PTPc"/>
    <property type="match status" value="1"/>
</dbReference>
<dbReference type="SMART" id="SM00404">
    <property type="entry name" value="PTPc_motif"/>
    <property type="match status" value="1"/>
</dbReference>
<dbReference type="SUPFAM" id="SSF52799">
    <property type="entry name" value="(Phosphotyrosine protein) phosphatases II"/>
    <property type="match status" value="1"/>
</dbReference>
<dbReference type="PROSITE" id="PS00383">
    <property type="entry name" value="TYR_PHOSPHATASE_1"/>
    <property type="match status" value="1"/>
</dbReference>
<dbReference type="PROSITE" id="PS50056">
    <property type="entry name" value="TYR_PHOSPHATASE_2"/>
    <property type="match status" value="1"/>
</dbReference>
<dbReference type="PROSITE" id="PS50055">
    <property type="entry name" value="TYR_PHOSPHATASE_PTP"/>
    <property type="match status" value="1"/>
</dbReference>
<name>PTN5_RAT</name>
<feature type="chain" id="PRO_0000094757" description="Tyrosine-protein phosphatase non-receptor type 5">
    <location>
        <begin position="1"/>
        <end position="369"/>
    </location>
</feature>
<feature type="domain" description="Tyrosine-protein phosphatase" evidence="3">
    <location>
        <begin position="104"/>
        <end position="359"/>
    </location>
</feature>
<feature type="active site" description="Phosphocysteine intermediate" evidence="3 4">
    <location>
        <position position="300"/>
    </location>
</feature>
<feature type="binding site" evidence="1">
    <location>
        <position position="265"/>
    </location>
    <ligand>
        <name>substrate</name>
    </ligand>
</feature>
<feature type="binding site" evidence="1">
    <location>
        <begin position="300"/>
        <end position="306"/>
    </location>
    <ligand>
        <name>substrate</name>
    </ligand>
</feature>
<feature type="binding site" evidence="1">
    <location>
        <position position="344"/>
    </location>
    <ligand>
        <name>substrate</name>
    </ligand>
</feature>
<feature type="modified residue" description="Phosphoserine; by PKA" evidence="2">
    <location>
        <position position="49"/>
    </location>
</feature>
<feature type="modified residue" description="Phosphothreonine; by MAPK" evidence="2">
    <location>
        <position position="59"/>
    </location>
</feature>
<feature type="modified residue" description="Phosphoserine; by MAPK" evidence="2">
    <location>
        <position position="72"/>
    </location>
</feature>
<comment type="function">
    <text evidence="1">May regulate the activity of several effector molecules involved in synaptic plasticity and neuronal cell survival, including MAPKs, Src family kinases and NMDA receptors.</text>
</comment>
<comment type="catalytic activity">
    <reaction evidence="4">
        <text>O-phospho-L-tyrosyl-[protein] + H2O = L-tyrosyl-[protein] + phosphate</text>
        <dbReference type="Rhea" id="RHEA:10684"/>
        <dbReference type="Rhea" id="RHEA-COMP:10136"/>
        <dbReference type="Rhea" id="RHEA-COMP:20101"/>
        <dbReference type="ChEBI" id="CHEBI:15377"/>
        <dbReference type="ChEBI" id="CHEBI:43474"/>
        <dbReference type="ChEBI" id="CHEBI:46858"/>
        <dbReference type="ChEBI" id="CHEBI:61978"/>
        <dbReference type="EC" id="3.1.3.48"/>
    </reaction>
</comment>
<comment type="subcellular location">
    <subcellularLocation>
        <location evidence="1">Cytoplasm</location>
    </subcellularLocation>
</comment>
<comment type="tissue specificity">
    <text>Expressed in the central nervous system except in the cerebellum. Enriched within the striatum relative to other brain areas.</text>
</comment>
<comment type="PTM">
    <text evidence="1">Phosphorylation at Ser-49 by PKA deactivates PTPN5. Phosphorylation at Thr-59 and Ser-72 by MAPKs stabilizes the phosphatase, dephosphorylation of these sites results in ubiquitin-mediated degradation of the active phosphatase (By similarity).</text>
</comment>
<comment type="similarity">
    <text evidence="5">Belongs to the protein-tyrosine phosphatase family. Non-receptor class subfamily.</text>
</comment>
<reference key="1">
    <citation type="journal article" date="1991" name="Proc. Natl. Acad. Sci. U.S.A.">
        <title>Molecular characterization of a protein-tyrosine-phosphatase enriched in striatum.</title>
        <authorList>
            <person name="Lombroso P.J."/>
            <person name="Murdoch G."/>
            <person name="Lerner M."/>
        </authorList>
    </citation>
    <scope>NUCLEOTIDE SEQUENCE [MRNA]</scope>
    <source>
        <tissue>Brain</tissue>
    </source>
</reference>